<dbReference type="EC" id="2.3.2.27" evidence="4"/>
<dbReference type="EMBL" id="AC007067">
    <property type="protein sequence ID" value="AAD39579.1"/>
    <property type="molecule type" value="Genomic_DNA"/>
</dbReference>
<dbReference type="EMBL" id="CP002684">
    <property type="protein sequence ID" value="AEE28594.1"/>
    <property type="molecule type" value="Genomic_DNA"/>
</dbReference>
<dbReference type="EMBL" id="AY075683">
    <property type="protein sequence ID" value="AAL77690.1"/>
    <property type="status" value="ALT_INIT"/>
    <property type="molecule type" value="mRNA"/>
</dbReference>
<dbReference type="PIR" id="B86239">
    <property type="entry name" value="B86239"/>
</dbReference>
<dbReference type="RefSeq" id="NP_172526.1">
    <property type="nucleotide sequence ID" value="NM_100931.3"/>
</dbReference>
<dbReference type="SMR" id="Q9XIJ5"/>
<dbReference type="FunCoup" id="Q9XIJ5">
    <property type="interactions" value="193"/>
</dbReference>
<dbReference type="STRING" id="3702.Q9XIJ5"/>
<dbReference type="iPTMnet" id="Q9XIJ5"/>
<dbReference type="PaxDb" id="3702-AT1G10560.1"/>
<dbReference type="EnsemblPlants" id="AT1G10560.1">
    <property type="protein sequence ID" value="AT1G10560.1"/>
    <property type="gene ID" value="AT1G10560"/>
</dbReference>
<dbReference type="GeneID" id="837597"/>
<dbReference type="Gramene" id="AT1G10560.1">
    <property type="protein sequence ID" value="AT1G10560.1"/>
    <property type="gene ID" value="AT1G10560"/>
</dbReference>
<dbReference type="KEGG" id="ath:AT1G10560"/>
<dbReference type="Araport" id="AT1G10560"/>
<dbReference type="TAIR" id="AT1G10560">
    <property type="gene designation" value="PUB18"/>
</dbReference>
<dbReference type="eggNOG" id="KOG0167">
    <property type="taxonomic scope" value="Eukaryota"/>
</dbReference>
<dbReference type="HOGENOM" id="CLU_006348_5_2_1"/>
<dbReference type="InParanoid" id="Q9XIJ5"/>
<dbReference type="OMA" id="DGARLCM"/>
<dbReference type="PhylomeDB" id="Q9XIJ5"/>
<dbReference type="UniPathway" id="UPA00143"/>
<dbReference type="PRO" id="PR:Q9XIJ5"/>
<dbReference type="Proteomes" id="UP000006548">
    <property type="component" value="Chromosome 1"/>
</dbReference>
<dbReference type="ExpressionAtlas" id="Q9XIJ5">
    <property type="expression patterns" value="baseline and differential"/>
</dbReference>
<dbReference type="GO" id="GO:0012505">
    <property type="term" value="C:endomembrane system"/>
    <property type="evidence" value="ECO:0007669"/>
    <property type="project" value="UniProtKB-SubCell"/>
</dbReference>
<dbReference type="GO" id="GO:0016020">
    <property type="term" value="C:membrane"/>
    <property type="evidence" value="ECO:0007669"/>
    <property type="project" value="UniProtKB-KW"/>
</dbReference>
<dbReference type="GO" id="GO:0061630">
    <property type="term" value="F:ubiquitin protein ligase activity"/>
    <property type="evidence" value="ECO:0000315"/>
    <property type="project" value="UniProtKB"/>
</dbReference>
<dbReference type="GO" id="GO:0004842">
    <property type="term" value="F:ubiquitin-protein transferase activity"/>
    <property type="evidence" value="ECO:0000314"/>
    <property type="project" value="TAIR"/>
</dbReference>
<dbReference type="GO" id="GO:0009738">
    <property type="term" value="P:abscisic acid-activated signaling pathway"/>
    <property type="evidence" value="ECO:0007669"/>
    <property type="project" value="UniProtKB-KW"/>
</dbReference>
<dbReference type="GO" id="GO:0016567">
    <property type="term" value="P:protein ubiquitination"/>
    <property type="evidence" value="ECO:0000314"/>
    <property type="project" value="TAIR"/>
</dbReference>
<dbReference type="GO" id="GO:0009787">
    <property type="term" value="P:regulation of abscisic acid-activated signaling pathway"/>
    <property type="evidence" value="ECO:0000315"/>
    <property type="project" value="UniProtKB"/>
</dbReference>
<dbReference type="GO" id="GO:0010029">
    <property type="term" value="P:regulation of seed germination"/>
    <property type="evidence" value="ECO:0000316"/>
    <property type="project" value="TAIR"/>
</dbReference>
<dbReference type="GO" id="GO:0010119">
    <property type="term" value="P:regulation of stomatal movement"/>
    <property type="evidence" value="ECO:0000315"/>
    <property type="project" value="UniProtKB"/>
</dbReference>
<dbReference type="CDD" id="cd16664">
    <property type="entry name" value="RING-Ubox_PUB"/>
    <property type="match status" value="1"/>
</dbReference>
<dbReference type="FunFam" id="1.25.10.10:FF:000485">
    <property type="entry name" value="RING-type E3 ubiquitin transferase"/>
    <property type="match status" value="1"/>
</dbReference>
<dbReference type="FunFam" id="3.30.40.10:FF:000442">
    <property type="entry name" value="RING-type E3 ubiquitin transferase"/>
    <property type="match status" value="1"/>
</dbReference>
<dbReference type="Gene3D" id="1.25.10.10">
    <property type="entry name" value="Leucine-rich Repeat Variant"/>
    <property type="match status" value="1"/>
</dbReference>
<dbReference type="Gene3D" id="3.30.40.10">
    <property type="entry name" value="Zinc/RING finger domain, C3HC4 (zinc finger)"/>
    <property type="match status" value="1"/>
</dbReference>
<dbReference type="InterPro" id="IPR011989">
    <property type="entry name" value="ARM-like"/>
</dbReference>
<dbReference type="InterPro" id="IPR016024">
    <property type="entry name" value="ARM-type_fold"/>
</dbReference>
<dbReference type="InterPro" id="IPR000225">
    <property type="entry name" value="Armadillo"/>
</dbReference>
<dbReference type="InterPro" id="IPR045210">
    <property type="entry name" value="RING-Ubox_PUB"/>
</dbReference>
<dbReference type="InterPro" id="IPR003613">
    <property type="entry name" value="Ubox_domain"/>
</dbReference>
<dbReference type="InterPro" id="IPR013083">
    <property type="entry name" value="Znf_RING/FYVE/PHD"/>
</dbReference>
<dbReference type="PANTHER" id="PTHR23315">
    <property type="entry name" value="U BOX DOMAIN-CONTAINING"/>
    <property type="match status" value="1"/>
</dbReference>
<dbReference type="PANTHER" id="PTHR23315:SF318">
    <property type="entry name" value="U-BOX DOMAIN-CONTAINING PROTEIN 18"/>
    <property type="match status" value="1"/>
</dbReference>
<dbReference type="Pfam" id="PF00514">
    <property type="entry name" value="Arm"/>
    <property type="match status" value="1"/>
</dbReference>
<dbReference type="Pfam" id="PF25368">
    <property type="entry name" value="PUB10_N"/>
    <property type="match status" value="1"/>
</dbReference>
<dbReference type="Pfam" id="PF04564">
    <property type="entry name" value="U-box"/>
    <property type="match status" value="1"/>
</dbReference>
<dbReference type="SMART" id="SM00185">
    <property type="entry name" value="ARM"/>
    <property type="match status" value="4"/>
</dbReference>
<dbReference type="SMART" id="SM00504">
    <property type="entry name" value="Ubox"/>
    <property type="match status" value="1"/>
</dbReference>
<dbReference type="SUPFAM" id="SSF48371">
    <property type="entry name" value="ARM repeat"/>
    <property type="match status" value="1"/>
</dbReference>
<dbReference type="SUPFAM" id="SSF57850">
    <property type="entry name" value="RING/U-box"/>
    <property type="match status" value="1"/>
</dbReference>
<dbReference type="PROSITE" id="PS50176">
    <property type="entry name" value="ARM_REPEAT"/>
    <property type="match status" value="1"/>
</dbReference>
<dbReference type="PROSITE" id="PS51698">
    <property type="entry name" value="U_BOX"/>
    <property type="match status" value="1"/>
</dbReference>
<gene>
    <name evidence="5" type="primary">PUB18</name>
    <name evidence="7" type="ordered locus">At1g10560</name>
    <name evidence="8" type="ORF">T10O24.19</name>
</gene>
<proteinExistence type="evidence at protein level"/>
<evidence type="ECO:0000250" key="1"/>
<evidence type="ECO:0000255" key="2"/>
<evidence type="ECO:0000255" key="3">
    <source>
        <dbReference type="PROSITE-ProRule" id="PRU01034"/>
    </source>
</evidence>
<evidence type="ECO:0000269" key="4">
    <source>
    </source>
</evidence>
<evidence type="ECO:0000303" key="5">
    <source>
    </source>
</evidence>
<evidence type="ECO:0000305" key="6"/>
<evidence type="ECO:0000312" key="7">
    <source>
        <dbReference type="Araport" id="AT1G10560"/>
    </source>
</evidence>
<evidence type="ECO:0000312" key="8">
    <source>
        <dbReference type="EMBL" id="AAD39579.1"/>
    </source>
</evidence>
<sequence length="697" mass="76995">MIHTKTGSGRRILTFPTVEPSESISIVTLLDSLIQLAGDILTFKSKHFSTNKQSFRETLRRIQNLLVVFEEIRIRIRNSRRYFHDSAAASSLKEIHVGFQKLKFLLEDCTRDGARLCMMMNSDQVSDHLRVLTRSISTSLSAFPVASVDLTTEVNELIDLVVRQARKYGVQPETNDKRAVSSINRILALFVNRVVPDPDEINRILDHVGIRKWGDCVKEINFLGEEIDAERLDEKKKKSSDQVELLSSLMGFICYCRCIILGRIERDDHHNHHEDGIKKDHDLIRGLKVEDLLCPISLEIMTDPVVIETGHTYDRSSITKWFGSGNITCPITGKILTSTELVDNVSVRQVIRKHCKTNGIVLAGISRRRKSHDDVVPESLAAKGAGKLIAKFLTSELINGGEEMIYRAVREIRVQTKTSSFNRSCLVKAGAVTPLLKLLSSVDIRIQENAMAGILNLSKHVTGKSKIAGEGLKILVEILNEGAKTETRLYSASALFYLSSVEDYSRLIGENPDAIPGLMNIVKGDDYGDSAKRSALLAVMGLLMQSDNHWRVLAAGAVPILLDLLRSGEISGGLTADCLATLAKLAEYPDGTIGVIRRGGLKLAVKILSSSEDSPVAVKQHCVGLILNLCLNGGRDVVGVLVKNSLVMGSLYTVLSNGEYGGSKKASALIRMIHEFQERKTGSVEPNLQRGRFVHAW</sequence>
<protein>
    <recommendedName>
        <fullName evidence="5">U-box domain-containing protein 18</fullName>
        <ecNumber evidence="4">2.3.2.27</ecNumber>
    </recommendedName>
    <alternativeName>
        <fullName evidence="5">Plant U-box protein 18</fullName>
    </alternativeName>
    <alternativeName>
        <fullName evidence="5">RING-type E3 ubiquitin transferase PUB18</fullName>
    </alternativeName>
</protein>
<organism>
    <name type="scientific">Arabidopsis thaliana</name>
    <name type="common">Mouse-ear cress</name>
    <dbReference type="NCBI Taxonomy" id="3702"/>
    <lineage>
        <taxon>Eukaryota</taxon>
        <taxon>Viridiplantae</taxon>
        <taxon>Streptophyta</taxon>
        <taxon>Embryophyta</taxon>
        <taxon>Tracheophyta</taxon>
        <taxon>Spermatophyta</taxon>
        <taxon>Magnoliopsida</taxon>
        <taxon>eudicotyledons</taxon>
        <taxon>Gunneridae</taxon>
        <taxon>Pentapetalae</taxon>
        <taxon>rosids</taxon>
        <taxon>malvids</taxon>
        <taxon>Brassicales</taxon>
        <taxon>Brassicaceae</taxon>
        <taxon>Camelineae</taxon>
        <taxon>Arabidopsis</taxon>
    </lineage>
</organism>
<feature type="chain" id="PRO_0000322162" description="U-box domain-containing protein 18">
    <location>
        <begin position="1"/>
        <end position="697"/>
    </location>
</feature>
<feature type="domain" description="U-box" evidence="3">
    <location>
        <begin position="287"/>
        <end position="361"/>
    </location>
</feature>
<feature type="repeat" description="ARM 1" evidence="2">
    <location>
        <begin position="420"/>
        <end position="459"/>
    </location>
</feature>
<feature type="repeat" description="ARM 2" evidence="2">
    <location>
        <begin position="461"/>
        <end position="500"/>
    </location>
</feature>
<feature type="repeat" description="ARM 3" evidence="2">
    <location>
        <begin position="502"/>
        <end position="544"/>
    </location>
</feature>
<feature type="repeat" description="ARM 4" evidence="2">
    <location>
        <begin position="546"/>
        <end position="587"/>
    </location>
</feature>
<feature type="repeat" description="ARM 5" evidence="2">
    <location>
        <begin position="589"/>
        <end position="631"/>
    </location>
</feature>
<feature type="repeat" description="ARM 6" evidence="2">
    <location>
        <begin position="657"/>
        <end position="696"/>
    </location>
</feature>
<feature type="region of interest" description="U-box N-terminal domain (UND) required for EXO70B1 binding and crucial for the negative regulation of ABA-dependent stomatal movement" evidence="4">
    <location>
        <begin position="23"/>
        <end position="210"/>
    </location>
</feature>
<feature type="mutagenesis site" description="Impaired EXO70B1 binding. Altered ubiquitination of EXO70B1, but unusual binding and ubiquitination of EXO70B2. Reduced abscisic acid (ABA)-mediated stomatal movements." evidence="4">
    <location>
        <begin position="23"/>
        <end position="210"/>
    </location>
</feature>
<feature type="mutagenesis site" description="Abrogated E3 ligase activity." evidence="4">
    <original>V</original>
    <variation>I</variation>
    <location>
        <position position="305"/>
    </location>
</feature>
<feature type="sequence conflict" description="In Ref. 3; AAL77690." evidence="6" ref="3">
    <original>M</original>
    <variation>V</variation>
    <location>
        <position position="648"/>
    </location>
</feature>
<feature type="sequence conflict" description="In Ref. 3; AAL77690." evidence="6" ref="3">
    <original>L</original>
    <variation>H</variation>
    <location>
        <position position="688"/>
    </location>
</feature>
<name>PUB18_ARATH</name>
<accession>Q9XIJ5</accession>
<accession>Q8S9I5</accession>
<reference key="1">
    <citation type="journal article" date="2000" name="Nature">
        <title>Sequence and analysis of chromosome 1 of the plant Arabidopsis thaliana.</title>
        <authorList>
            <person name="Theologis A."/>
            <person name="Ecker J.R."/>
            <person name="Palm C.J."/>
            <person name="Federspiel N.A."/>
            <person name="Kaul S."/>
            <person name="White O."/>
            <person name="Alonso J."/>
            <person name="Altafi H."/>
            <person name="Araujo R."/>
            <person name="Bowman C.L."/>
            <person name="Brooks S.Y."/>
            <person name="Buehler E."/>
            <person name="Chan A."/>
            <person name="Chao Q."/>
            <person name="Chen H."/>
            <person name="Cheuk R.F."/>
            <person name="Chin C.W."/>
            <person name="Chung M.K."/>
            <person name="Conn L."/>
            <person name="Conway A.B."/>
            <person name="Conway A.R."/>
            <person name="Creasy T.H."/>
            <person name="Dewar K."/>
            <person name="Dunn P."/>
            <person name="Etgu P."/>
            <person name="Feldblyum T.V."/>
            <person name="Feng J.-D."/>
            <person name="Fong B."/>
            <person name="Fujii C.Y."/>
            <person name="Gill J.E."/>
            <person name="Goldsmith A.D."/>
            <person name="Haas B."/>
            <person name="Hansen N.F."/>
            <person name="Hughes B."/>
            <person name="Huizar L."/>
            <person name="Hunter J.L."/>
            <person name="Jenkins J."/>
            <person name="Johnson-Hopson C."/>
            <person name="Khan S."/>
            <person name="Khaykin E."/>
            <person name="Kim C.J."/>
            <person name="Koo H.L."/>
            <person name="Kremenetskaia I."/>
            <person name="Kurtz D.B."/>
            <person name="Kwan A."/>
            <person name="Lam B."/>
            <person name="Langin-Hooper S."/>
            <person name="Lee A."/>
            <person name="Lee J.M."/>
            <person name="Lenz C.A."/>
            <person name="Li J.H."/>
            <person name="Li Y.-P."/>
            <person name="Lin X."/>
            <person name="Liu S.X."/>
            <person name="Liu Z.A."/>
            <person name="Luros J.S."/>
            <person name="Maiti R."/>
            <person name="Marziali A."/>
            <person name="Militscher J."/>
            <person name="Miranda M."/>
            <person name="Nguyen M."/>
            <person name="Nierman W.C."/>
            <person name="Osborne B.I."/>
            <person name="Pai G."/>
            <person name="Peterson J."/>
            <person name="Pham P.K."/>
            <person name="Rizzo M."/>
            <person name="Rooney T."/>
            <person name="Rowley D."/>
            <person name="Sakano H."/>
            <person name="Salzberg S.L."/>
            <person name="Schwartz J.R."/>
            <person name="Shinn P."/>
            <person name="Southwick A.M."/>
            <person name="Sun H."/>
            <person name="Tallon L.J."/>
            <person name="Tambunga G."/>
            <person name="Toriumi M.J."/>
            <person name="Town C.D."/>
            <person name="Utterback T."/>
            <person name="Van Aken S."/>
            <person name="Vaysberg M."/>
            <person name="Vysotskaia V.S."/>
            <person name="Walker M."/>
            <person name="Wu D."/>
            <person name="Yu G."/>
            <person name="Fraser C.M."/>
            <person name="Venter J.C."/>
            <person name="Davis R.W."/>
        </authorList>
    </citation>
    <scope>NUCLEOTIDE SEQUENCE [LARGE SCALE GENOMIC DNA]</scope>
    <source>
        <strain>cv. Columbia</strain>
    </source>
</reference>
<reference key="2">
    <citation type="journal article" date="2017" name="Plant J.">
        <title>Araport11: a complete reannotation of the Arabidopsis thaliana reference genome.</title>
        <authorList>
            <person name="Cheng C.Y."/>
            <person name="Krishnakumar V."/>
            <person name="Chan A.P."/>
            <person name="Thibaud-Nissen F."/>
            <person name="Schobel S."/>
            <person name="Town C.D."/>
        </authorList>
    </citation>
    <scope>GENOME REANNOTATION</scope>
    <source>
        <strain>cv. Columbia</strain>
    </source>
</reference>
<reference key="3">
    <citation type="journal article" date="2003" name="Science">
        <title>Empirical analysis of transcriptional activity in the Arabidopsis genome.</title>
        <authorList>
            <person name="Yamada K."/>
            <person name="Lim J."/>
            <person name="Dale J.M."/>
            <person name="Chen H."/>
            <person name="Shinn P."/>
            <person name="Palm C.J."/>
            <person name="Southwick A.M."/>
            <person name="Wu H.C."/>
            <person name="Kim C.J."/>
            <person name="Nguyen M."/>
            <person name="Pham P.K."/>
            <person name="Cheuk R.F."/>
            <person name="Karlin-Newmann G."/>
            <person name="Liu S.X."/>
            <person name="Lam B."/>
            <person name="Sakano H."/>
            <person name="Wu T."/>
            <person name="Yu G."/>
            <person name="Miranda M."/>
            <person name="Quach H.L."/>
            <person name="Tripp M."/>
            <person name="Chang C.H."/>
            <person name="Lee J.M."/>
            <person name="Toriumi M.J."/>
            <person name="Chan M.M."/>
            <person name="Tang C.C."/>
            <person name="Onodera C.S."/>
            <person name="Deng J.M."/>
            <person name="Akiyama K."/>
            <person name="Ansari Y."/>
            <person name="Arakawa T."/>
            <person name="Banh J."/>
            <person name="Banno F."/>
            <person name="Bowser L."/>
            <person name="Brooks S.Y."/>
            <person name="Carninci P."/>
            <person name="Chao Q."/>
            <person name="Choy N."/>
            <person name="Enju A."/>
            <person name="Goldsmith A.D."/>
            <person name="Gurjal M."/>
            <person name="Hansen N.F."/>
            <person name="Hayashizaki Y."/>
            <person name="Johnson-Hopson C."/>
            <person name="Hsuan V.W."/>
            <person name="Iida K."/>
            <person name="Karnes M."/>
            <person name="Khan S."/>
            <person name="Koesema E."/>
            <person name="Ishida J."/>
            <person name="Jiang P.X."/>
            <person name="Jones T."/>
            <person name="Kawai J."/>
            <person name="Kamiya A."/>
            <person name="Meyers C."/>
            <person name="Nakajima M."/>
            <person name="Narusaka M."/>
            <person name="Seki M."/>
            <person name="Sakurai T."/>
            <person name="Satou M."/>
            <person name="Tamse R."/>
            <person name="Vaysberg M."/>
            <person name="Wallender E.K."/>
            <person name="Wong C."/>
            <person name="Yamamura Y."/>
            <person name="Yuan S."/>
            <person name="Shinozaki K."/>
            <person name="Davis R.W."/>
            <person name="Theologis A."/>
            <person name="Ecker J.R."/>
        </authorList>
    </citation>
    <scope>NUCLEOTIDE SEQUENCE [LARGE SCALE MRNA] OF 443-697</scope>
    <source>
        <strain>cv. Columbia</strain>
    </source>
</reference>
<reference key="4">
    <citation type="journal article" date="2001" name="Trends Plant Sci.">
        <title>The U-box protein family in plants.</title>
        <authorList>
            <person name="Azevedo C."/>
            <person name="Santos-Rosa M.J."/>
            <person name="Shirasu K."/>
        </authorList>
    </citation>
    <scope>GENE FAMILY ORGANIZATION</scope>
    <scope>NOMENCLATURE</scope>
</reference>
<reference key="5">
    <citation type="journal article" date="2004" name="Plant Physiol.">
        <title>A large complement of the predicted Arabidopsis ARM repeat proteins are members of the U-box E3 ubiquitin ligase family.</title>
        <authorList>
            <person name="Mudgil Y."/>
            <person name="Shiu S.-H."/>
            <person name="Stone S.L."/>
            <person name="Salt J.N."/>
            <person name="Goring D.R."/>
        </authorList>
    </citation>
    <scope>GENE FAMILY ORGANIZATION</scope>
</reference>
<reference key="6">
    <citation type="journal article" date="2016" name="Plant Cell">
        <title>The N-terminal UND motif of the Arabidopsis U-box E3 ligase PUB18 is critical for the negative regulation of ABA-mediated stomatal movement and determines its ubiquitination specificity for exocyst subunit Exo70B1.</title>
        <authorList>
            <person name="Seo D.H."/>
            <person name="Ahn M.Y."/>
            <person name="Park K.Y."/>
            <person name="Kim E.Y."/>
            <person name="Kim W.T."/>
        </authorList>
    </citation>
    <scope>FUNCTION</scope>
    <scope>INTERACTION WITH EXO70B1</scope>
    <scope>DOMAIN UND</scope>
    <scope>MUTAGENESIS OF 23-SER--ILE-210 AND VAL-305</scope>
    <scope>CATALYTIC ACTIVITY</scope>
    <scope>SUBCELLULAR LOCATION</scope>
    <source>
        <strain>cv. Columbia</strain>
    </source>
</reference>
<keyword id="KW-0938">Abscisic acid signaling pathway</keyword>
<keyword id="KW-0472">Membrane</keyword>
<keyword id="KW-1185">Reference proteome</keyword>
<keyword id="KW-0677">Repeat</keyword>
<keyword id="KW-0808">Transferase</keyword>
<keyword id="KW-0833">Ubl conjugation pathway</keyword>
<comment type="function">
    <text evidence="1 4">Functions as an E3 ubiquitin ligase (By similarity). Mediates EXO70B1 ubiquitination. Involved in the regulation of abscisic acid (ABA)-mediated stomatal movements (PubMed:27956469).</text>
</comment>
<comment type="catalytic activity">
    <reaction evidence="4">
        <text>S-ubiquitinyl-[E2 ubiquitin-conjugating enzyme]-L-cysteine + [acceptor protein]-L-lysine = [E2 ubiquitin-conjugating enzyme]-L-cysteine + N(6)-ubiquitinyl-[acceptor protein]-L-lysine.</text>
        <dbReference type="EC" id="2.3.2.27"/>
    </reaction>
</comment>
<comment type="pathway">
    <text evidence="4">Protein modification; protein ubiquitination.</text>
</comment>
<comment type="subunit">
    <text evidence="4">Interacts with EXO70B1 via its U-box N-terminal domain (UND).</text>
</comment>
<comment type="subcellular location">
    <subcellularLocation>
        <location evidence="4">Endomembrane system</location>
    </subcellularLocation>
    <text evidence="4">Displays a punctate pattern. Colocalizes with EXO70B1.</text>
</comment>
<comment type="domain">
    <text evidence="4">The U-box N-terminal domain (UND) confers binding specificity and subsequent ubiquitination.</text>
</comment>
<comment type="sequence caution" evidence="6">
    <conflict type="erroneous initiation">
        <sequence resource="EMBL-CDS" id="AAL77690"/>
    </conflict>
</comment>